<sequence>MSIEETVIELFDRLFMEDVSEMMDEDLFDAGVLDSLGTVELIVELESTFNIKVPISEFGRDDWNTVTKIVQGVEELQHA</sequence>
<proteinExistence type="inferred from homology"/>
<comment type="function">
    <text evidence="1">Carrier protein involved in the D-alanylation of lipoteichoic acid (LTA). The loading of thioester-linked D-alanine onto DltC is catalyzed by D-alanine--D-alanyl carrier protein ligase DltA. The DltC-carried D-alanyl group is further transferred to cell membrane phosphatidylglycerol (PG) by forming an ester bond, probably catalyzed by DltD. D-alanylation of LTA plays an important role in modulating the properties of the cell wall in Gram-positive bacteria, influencing the net charge of the cell wall.</text>
</comment>
<comment type="pathway">
    <text evidence="1">Cell wall biogenesis; lipoteichoic acid biosynthesis.</text>
</comment>
<comment type="subcellular location">
    <subcellularLocation>
        <location evidence="1">Cytoplasm</location>
    </subcellularLocation>
</comment>
<comment type="PTM">
    <text evidence="1">4'-phosphopantetheine is transferred from CoA to a specific serine of apo-DCP.</text>
</comment>
<comment type="similarity">
    <text evidence="1">Belongs to the DltC family.</text>
</comment>
<evidence type="ECO:0000255" key="1">
    <source>
        <dbReference type="HAMAP-Rule" id="MF_00565"/>
    </source>
</evidence>
<protein>
    <recommendedName>
        <fullName evidence="1">D-alanyl carrier protein</fullName>
        <shortName evidence="1">DCP</shortName>
    </recommendedName>
    <alternativeName>
        <fullName evidence="1">D-alanine--poly(phosphoribitol) ligase subunit 2</fullName>
    </alternativeName>
</protein>
<organism>
    <name type="scientific">Streptococcus pyogenes serotype M4 (strain MGAS10750)</name>
    <dbReference type="NCBI Taxonomy" id="370554"/>
    <lineage>
        <taxon>Bacteria</taxon>
        <taxon>Bacillati</taxon>
        <taxon>Bacillota</taxon>
        <taxon>Bacilli</taxon>
        <taxon>Lactobacillales</taxon>
        <taxon>Streptococcaceae</taxon>
        <taxon>Streptococcus</taxon>
    </lineage>
</organism>
<accession>Q1J669</accession>
<name>DLTC_STRPF</name>
<reference key="1">
    <citation type="journal article" date="2006" name="Proc. Natl. Acad. Sci. U.S.A.">
        <title>Molecular genetic anatomy of inter- and intraserotype variation in the human bacterial pathogen group A Streptococcus.</title>
        <authorList>
            <person name="Beres S.B."/>
            <person name="Richter E.W."/>
            <person name="Nagiec M.J."/>
            <person name="Sumby P."/>
            <person name="Porcella S.F."/>
            <person name="DeLeo F.R."/>
            <person name="Musser J.M."/>
        </authorList>
    </citation>
    <scope>NUCLEOTIDE SEQUENCE [LARGE SCALE GENOMIC DNA]</scope>
    <source>
        <strain>MGAS10750</strain>
    </source>
</reference>
<feature type="chain" id="PRO_1000024931" description="D-alanyl carrier protein">
    <location>
        <begin position="1"/>
        <end position="79"/>
    </location>
</feature>
<feature type="domain" description="Carrier" evidence="1">
    <location>
        <begin position="1"/>
        <end position="77"/>
    </location>
</feature>
<feature type="modified residue" description="O-(pantetheine 4'-phosphoryl)serine" evidence="1">
    <location>
        <position position="35"/>
    </location>
</feature>
<gene>
    <name evidence="1" type="primary">dltC</name>
    <name type="ordered locus">MGAS10750_Spy1164</name>
</gene>
<keyword id="KW-0961">Cell wall biogenesis/degradation</keyword>
<keyword id="KW-0963">Cytoplasm</keyword>
<keyword id="KW-0596">Phosphopantetheine</keyword>
<keyword id="KW-0597">Phosphoprotein</keyword>
<dbReference type="EMBL" id="CP000262">
    <property type="protein sequence ID" value="ABF38114.1"/>
    <property type="molecule type" value="Genomic_DNA"/>
</dbReference>
<dbReference type="SMR" id="Q1J669"/>
<dbReference type="KEGG" id="spi:MGAS10750_Spy1164"/>
<dbReference type="HOGENOM" id="CLU_108696_19_0_9"/>
<dbReference type="UniPathway" id="UPA00556"/>
<dbReference type="Proteomes" id="UP000002434">
    <property type="component" value="Chromosome"/>
</dbReference>
<dbReference type="GO" id="GO:0005737">
    <property type="term" value="C:cytoplasm"/>
    <property type="evidence" value="ECO:0007669"/>
    <property type="project" value="UniProtKB-SubCell"/>
</dbReference>
<dbReference type="GO" id="GO:0036370">
    <property type="term" value="F:D-alanyl carrier activity"/>
    <property type="evidence" value="ECO:0007669"/>
    <property type="project" value="UniProtKB-UniRule"/>
</dbReference>
<dbReference type="GO" id="GO:0071555">
    <property type="term" value="P:cell wall organization"/>
    <property type="evidence" value="ECO:0007669"/>
    <property type="project" value="UniProtKB-KW"/>
</dbReference>
<dbReference type="GO" id="GO:0070395">
    <property type="term" value="P:lipoteichoic acid biosynthetic process"/>
    <property type="evidence" value="ECO:0007669"/>
    <property type="project" value="UniProtKB-UniRule"/>
</dbReference>
<dbReference type="Gene3D" id="1.10.1200.10">
    <property type="entry name" value="ACP-like"/>
    <property type="match status" value="1"/>
</dbReference>
<dbReference type="HAMAP" id="MF_00565">
    <property type="entry name" value="DltC"/>
    <property type="match status" value="1"/>
</dbReference>
<dbReference type="InterPro" id="IPR036736">
    <property type="entry name" value="ACP-like_sf"/>
</dbReference>
<dbReference type="InterPro" id="IPR003230">
    <property type="entry name" value="DltC"/>
</dbReference>
<dbReference type="InterPro" id="IPR009081">
    <property type="entry name" value="PP-bd_ACP"/>
</dbReference>
<dbReference type="NCBIfam" id="TIGR01688">
    <property type="entry name" value="dltC"/>
    <property type="match status" value="1"/>
</dbReference>
<dbReference type="NCBIfam" id="NF003464">
    <property type="entry name" value="PRK05087.1"/>
    <property type="match status" value="1"/>
</dbReference>
<dbReference type="Pfam" id="PF00550">
    <property type="entry name" value="PP-binding"/>
    <property type="match status" value="1"/>
</dbReference>
<dbReference type="SUPFAM" id="SSF47336">
    <property type="entry name" value="ACP-like"/>
    <property type="match status" value="1"/>
</dbReference>
<dbReference type="PROSITE" id="PS50075">
    <property type="entry name" value="CARRIER"/>
    <property type="match status" value="1"/>
</dbReference>